<evidence type="ECO:0000255" key="1">
    <source>
        <dbReference type="HAMAP-Rule" id="MF_01698"/>
    </source>
</evidence>
<sequence>MTEWVPLLDNRRQLQIRELIVEATRADGIAPVGEQVLRELRGTGAKHLVAEDGDDVAAFLNLVVPDEAASENATAMAELVVAPAARRRGIGSAMVREALAEGGAGTRVWAHGDLPAAQSLATKLGLVALRRLHQMRRALADLPAIRVDASVTVRHYLGPQDDSDLLRVNNAAFSWHPEQGGWTPGDLADRFAEPWFDPRGLFLAHDVQTAKLLGFHWTKRHLDKPGMGEVYIVGVDPAAQGRGLGHLLTLVGLHHLAGLGLETVLLYVESDNQAALRTYERLGFAVALTDAAYGRA</sequence>
<organism>
    <name type="scientific">Mycobacteroides abscessus (strain ATCC 19977 / DSM 44196 / CCUG 20993 / CIP 104536 / JCM 13569 / NCTC 13031 / TMC 1543 / L948)</name>
    <name type="common">Mycobacterium abscessus</name>
    <dbReference type="NCBI Taxonomy" id="561007"/>
    <lineage>
        <taxon>Bacteria</taxon>
        <taxon>Bacillati</taxon>
        <taxon>Actinomycetota</taxon>
        <taxon>Actinomycetes</taxon>
        <taxon>Mycobacteriales</taxon>
        <taxon>Mycobacteriaceae</taxon>
        <taxon>Mycobacteroides</taxon>
        <taxon>Mycobacteroides abscessus</taxon>
    </lineage>
</organism>
<keyword id="KW-0012">Acyltransferase</keyword>
<keyword id="KW-1185">Reference proteome</keyword>
<keyword id="KW-0677">Repeat</keyword>
<keyword id="KW-0808">Transferase</keyword>
<feature type="chain" id="PRO_0000400266" description="Mycothiol acetyltransferase">
    <location>
        <begin position="1"/>
        <end position="296"/>
    </location>
</feature>
<feature type="domain" description="N-acetyltransferase 1" evidence="1">
    <location>
        <begin position="1"/>
        <end position="148"/>
    </location>
</feature>
<feature type="domain" description="N-acetyltransferase 2" evidence="1">
    <location>
        <begin position="151"/>
        <end position="296"/>
    </location>
</feature>
<feature type="binding site" evidence="1">
    <location>
        <position position="34"/>
    </location>
    <ligand>
        <name>1D-myo-inositol 2-(L-cysteinylamino)-2-deoxy-alpha-D-glucopyranoside</name>
        <dbReference type="ChEBI" id="CHEBI:58887"/>
    </ligand>
</feature>
<feature type="binding site" evidence="1">
    <location>
        <begin position="79"/>
        <end position="81"/>
    </location>
    <ligand>
        <name>acetyl-CoA</name>
        <dbReference type="ChEBI" id="CHEBI:57288"/>
        <label>1</label>
    </ligand>
</feature>
<feature type="binding site" evidence="1">
    <location>
        <begin position="87"/>
        <end position="92"/>
    </location>
    <ligand>
        <name>acetyl-CoA</name>
        <dbReference type="ChEBI" id="CHEBI:57288"/>
        <label>1</label>
    </ligand>
</feature>
<feature type="binding site" evidence="1">
    <location>
        <position position="178"/>
    </location>
    <ligand>
        <name>1D-myo-inositol 2-(L-cysteinylamino)-2-deoxy-alpha-D-glucopyranoside</name>
        <dbReference type="ChEBI" id="CHEBI:58887"/>
    </ligand>
</feature>
<feature type="binding site" evidence="1">
    <location>
        <position position="219"/>
    </location>
    <ligand>
        <name>1D-myo-inositol 2-(L-cysteinylamino)-2-deoxy-alpha-D-glucopyranoside</name>
        <dbReference type="ChEBI" id="CHEBI:58887"/>
    </ligand>
</feature>
<feature type="binding site" evidence="1">
    <location>
        <position position="229"/>
    </location>
    <ligand>
        <name>1D-myo-inositol 2-(L-cysteinylamino)-2-deoxy-alpha-D-glucopyranoside</name>
        <dbReference type="ChEBI" id="CHEBI:58887"/>
    </ligand>
</feature>
<feature type="binding site" evidence="1">
    <location>
        <begin position="233"/>
        <end position="235"/>
    </location>
    <ligand>
        <name>acetyl-CoA</name>
        <dbReference type="ChEBI" id="CHEBI:57288"/>
        <label>2</label>
    </ligand>
</feature>
<feature type="binding site" evidence="1">
    <location>
        <begin position="240"/>
        <end position="246"/>
    </location>
    <ligand>
        <name>acetyl-CoA</name>
        <dbReference type="ChEBI" id="CHEBI:57288"/>
        <label>2</label>
    </ligand>
</feature>
<feature type="binding site" evidence="1">
    <location>
        <position position="267"/>
    </location>
    <ligand>
        <name>1D-myo-inositol 2-(L-cysteinylamino)-2-deoxy-alpha-D-glucopyranoside</name>
        <dbReference type="ChEBI" id="CHEBI:58887"/>
    </ligand>
</feature>
<feature type="binding site" evidence="1">
    <location>
        <begin position="272"/>
        <end position="277"/>
    </location>
    <ligand>
        <name>acetyl-CoA</name>
        <dbReference type="ChEBI" id="CHEBI:57288"/>
        <label>2</label>
    </ligand>
</feature>
<gene>
    <name evidence="1" type="primary">mshD</name>
    <name type="ordered locus">MAB_0745</name>
</gene>
<accession>B1MI19</accession>
<dbReference type="EC" id="2.3.1.189" evidence="1"/>
<dbReference type="EMBL" id="CU458896">
    <property type="protein sequence ID" value="CAM60841.1"/>
    <property type="molecule type" value="Genomic_DNA"/>
</dbReference>
<dbReference type="RefSeq" id="WP_005092494.1">
    <property type="nucleotide sequence ID" value="NZ_MLCG01000008.1"/>
</dbReference>
<dbReference type="SMR" id="B1MI19"/>
<dbReference type="GeneID" id="93377690"/>
<dbReference type="KEGG" id="mab:MAB_0745"/>
<dbReference type="Proteomes" id="UP000007137">
    <property type="component" value="Chromosome"/>
</dbReference>
<dbReference type="GO" id="GO:0035447">
    <property type="term" value="F:mycothiol synthase activity"/>
    <property type="evidence" value="ECO:0007669"/>
    <property type="project" value="UniProtKB-UniRule"/>
</dbReference>
<dbReference type="GO" id="GO:0008999">
    <property type="term" value="F:protein-N-terminal-alanine acetyltransferase activity"/>
    <property type="evidence" value="ECO:0007669"/>
    <property type="project" value="TreeGrafter"/>
</dbReference>
<dbReference type="GO" id="GO:0010125">
    <property type="term" value="P:mycothiol biosynthetic process"/>
    <property type="evidence" value="ECO:0007669"/>
    <property type="project" value="UniProtKB-UniRule"/>
</dbReference>
<dbReference type="CDD" id="cd04301">
    <property type="entry name" value="NAT_SF"/>
    <property type="match status" value="2"/>
</dbReference>
<dbReference type="Gene3D" id="3.40.630.30">
    <property type="match status" value="1"/>
</dbReference>
<dbReference type="HAMAP" id="MF_01698">
    <property type="entry name" value="MshD"/>
    <property type="match status" value="1"/>
</dbReference>
<dbReference type="InterPro" id="IPR016181">
    <property type="entry name" value="Acyl_CoA_acyltransferase"/>
</dbReference>
<dbReference type="InterPro" id="IPR000182">
    <property type="entry name" value="GNAT_dom"/>
</dbReference>
<dbReference type="InterPro" id="IPR050276">
    <property type="entry name" value="MshD_Acetyltransferase"/>
</dbReference>
<dbReference type="InterPro" id="IPR017813">
    <property type="entry name" value="Mycothiol_AcTrfase"/>
</dbReference>
<dbReference type="NCBIfam" id="TIGR03448">
    <property type="entry name" value="mycothiol_MshD"/>
    <property type="match status" value="1"/>
</dbReference>
<dbReference type="PANTHER" id="PTHR43617">
    <property type="entry name" value="L-AMINO ACID N-ACETYLTRANSFERASE"/>
    <property type="match status" value="1"/>
</dbReference>
<dbReference type="PANTHER" id="PTHR43617:SF31">
    <property type="entry name" value="MYCOTHIOL ACETYLTRANSFERASE"/>
    <property type="match status" value="1"/>
</dbReference>
<dbReference type="Pfam" id="PF00583">
    <property type="entry name" value="Acetyltransf_1"/>
    <property type="match status" value="2"/>
</dbReference>
<dbReference type="PIRSF" id="PIRSF021524">
    <property type="entry name" value="MSH_acetyltransferase"/>
    <property type="match status" value="1"/>
</dbReference>
<dbReference type="SUPFAM" id="SSF55729">
    <property type="entry name" value="Acyl-CoA N-acyltransferases (Nat)"/>
    <property type="match status" value="1"/>
</dbReference>
<dbReference type="PROSITE" id="PS51186">
    <property type="entry name" value="GNAT"/>
    <property type="match status" value="2"/>
</dbReference>
<proteinExistence type="inferred from homology"/>
<reference key="1">
    <citation type="journal article" date="2009" name="PLoS ONE">
        <title>Non mycobacterial virulence genes in the genome of the emerging pathogen Mycobacterium abscessus.</title>
        <authorList>
            <person name="Ripoll F."/>
            <person name="Pasek S."/>
            <person name="Schenowitz C."/>
            <person name="Dossat C."/>
            <person name="Barbe V."/>
            <person name="Rottman M."/>
            <person name="Macheras E."/>
            <person name="Heym B."/>
            <person name="Herrmann J.L."/>
            <person name="Daffe M."/>
            <person name="Brosch R."/>
            <person name="Risler J.L."/>
            <person name="Gaillard J.L."/>
        </authorList>
    </citation>
    <scope>NUCLEOTIDE SEQUENCE [LARGE SCALE GENOMIC DNA]</scope>
    <source>
        <strain>ATCC 19977 / DSM 44196 / CCUG 20993 / CIP 104536 / JCM 13569 / NCTC 13031 / TMC 1543 / L948</strain>
    </source>
</reference>
<name>MSHD_MYCA9</name>
<protein>
    <recommendedName>
        <fullName evidence="1">Mycothiol acetyltransferase</fullName>
        <shortName evidence="1">MSH acetyltransferase</shortName>
        <ecNumber evidence="1">2.3.1.189</ecNumber>
    </recommendedName>
    <alternativeName>
        <fullName evidence="1">Mycothiol synthase</fullName>
    </alternativeName>
</protein>
<comment type="function">
    <text evidence="1">Catalyzes the transfer of acetyl from acetyl-CoA to desacetylmycothiol (Cys-GlcN-Ins) to form mycothiol.</text>
</comment>
<comment type="catalytic activity">
    <reaction evidence="1">
        <text>1D-myo-inositol 2-(L-cysteinylamino)-2-deoxy-alpha-D-glucopyranoside + acetyl-CoA = mycothiol + CoA + H(+)</text>
        <dbReference type="Rhea" id="RHEA:26172"/>
        <dbReference type="ChEBI" id="CHEBI:15378"/>
        <dbReference type="ChEBI" id="CHEBI:16768"/>
        <dbReference type="ChEBI" id="CHEBI:57287"/>
        <dbReference type="ChEBI" id="CHEBI:57288"/>
        <dbReference type="ChEBI" id="CHEBI:58887"/>
        <dbReference type="EC" id="2.3.1.189"/>
    </reaction>
</comment>
<comment type="subunit">
    <text evidence="1">Monomer.</text>
</comment>
<comment type="similarity">
    <text evidence="1">Belongs to the acetyltransferase family. MshD subfamily.</text>
</comment>